<comment type="function">
    <text>Couples tyrosine kinase signals with the activation of the Rho/Rac GTPases, thus leading to cell differentiation and/or proliferation.</text>
</comment>
<comment type="subunit">
    <text evidence="2 9 11 12 13 14 15 16 17 19 20 21 22 23">Interacts with SHB (PubMed:12084069). Interacts with SH2B2, GRB2, GRB3, DOCK2, SLA, TEC and ZNF655/VIK (PubMed:12393632, PubMed:12400014, PubMed:15558030). Interacts with SIAH2; without leading to its degradation (PubMed:10207103). Associates with BLNK, PLCG1, GRB2 and NCK1 in a B-cell antigen receptor-dependent fashion (PubMed:9697839). Interacts with CBLB; which inhibits tyrosine phosphorylation and down-regulates activity (PubMed:9399639). May interact with CCPG1. Interacts with CLNK. Interacts with THEMIS2 (By similarity). Interacts with NEK3 and this interaction is prolactin-dependent (PubMed:15618286). Interacts with ITK (PubMed:15661896). Interacts with PTK2B/PYK2 (By similarity). Interacts with HCK. Interacts with PTK2B/PYK2 (PubMed:19207108). Interacts (via SH2 domain) with SYK (PubMed:8986718). Interacts with ANKRD54. Interacts with CD6 (By similarity). Interacts with isoform 2 of CRACR2A (PubMed:27016526). Interacts with LCP2; this interaction plays a role in TCR-mediated cytokine production (PubMed:8673706).</text>
</comment>
<comment type="interaction">
    <interactant intactId="EBI-625518">
        <id>P15498</id>
    </interactant>
    <interactant intactId="EBI-375446">
        <id>Q8IZP0</id>
        <label>ABI1</label>
    </interactant>
    <organismsDiffer>false</organismsDiffer>
    <experiments>2</experiments>
</comment>
<comment type="interaction">
    <interactant intactId="EBI-625518">
        <id>P15498</id>
    </interactant>
    <interactant intactId="EBI-375543">
        <id>P00519</id>
        <label>ABL1</label>
    </interactant>
    <organismsDiffer>false</organismsDiffer>
    <experiments>5</experiments>
</comment>
<comment type="interaction">
    <interactant intactId="EBI-625518">
        <id>P15498</id>
    </interactant>
    <interactant intactId="EBI-517684">
        <id>Q13480</id>
        <label>GAB1</label>
    </interactant>
    <organismsDiffer>false</organismsDiffer>
    <experiments>2</experiments>
</comment>
<comment type="interaction">
    <interactant intactId="EBI-625518">
        <id>P15498</id>
    </interactant>
    <interactant intactId="EBI-401755">
        <id>P62993</id>
        <label>GRB2</label>
    </interactant>
    <organismsDiffer>false</organismsDiffer>
    <experiments>3</experiments>
</comment>
<comment type="interaction">
    <interactant intactId="EBI-625518">
        <id>P15498</id>
    </interactant>
    <interactant intactId="EBI-1364">
        <id>Q07666</id>
        <label>KHDRBS1</label>
    </interactant>
    <organismsDiffer>false</organismsDiffer>
    <experiments>3</experiments>
</comment>
<comment type="interaction">
    <interactant intactId="EBI-625518">
        <id>P15498</id>
    </interactant>
    <interactant intactId="EBI-346946">
        <id>Q13094</id>
        <label>LCP2</label>
    </interactant>
    <organismsDiffer>false</organismsDiffer>
    <experiments>9</experiments>
</comment>
<comment type="interaction">
    <interactant intactId="EBI-625518">
        <id>P15498</id>
    </interactant>
    <interactant intactId="EBI-413628">
        <id>P63000</id>
        <label>RAC1</label>
    </interactant>
    <organismsDiffer>false</organismsDiffer>
    <experiments>2</experiments>
</comment>
<comment type="interaction">
    <interactant intactId="EBI-625518">
        <id>P15498</id>
    </interactant>
    <interactant intactId="EBI-727062">
        <id>P78314</id>
        <label>SH3BP2</label>
    </interactant>
    <organismsDiffer>false</organismsDiffer>
    <experiments>8</experiments>
</comment>
<comment type="interaction">
    <interactant intactId="EBI-625518">
        <id>P15498</id>
    </interactant>
    <interactant intactId="EBI-625509">
        <id>Q8N720</id>
        <label>ZNF655</label>
    </interactant>
    <organismsDiffer>false</organismsDiffer>
    <experiments>5</experiments>
</comment>
<comment type="interaction">
    <interactant intactId="EBI-625518">
        <id>P15498</id>
    </interactant>
    <interactant intactId="EBI-8013886">
        <id>P08487</id>
        <label>PLCG1</label>
    </interactant>
    <organismsDiffer>true</organismsDiffer>
    <experiments>4</experiments>
</comment>
<comment type="alternative products">
    <event type="alternative splicing"/>
    <isoform>
        <id>P15498-1</id>
        <name>1</name>
        <sequence type="displayed"/>
    </isoform>
    <isoform>
        <id>P15498-2</id>
        <name>2</name>
        <sequence type="described" ref="VSP_047563"/>
    </isoform>
</comment>
<comment type="tissue specificity">
    <text>Widely expressed in hematopoietic cells but not in other cell types.</text>
</comment>
<comment type="domain">
    <text evidence="1">The DH domain is involved in interaction with CCPG1.</text>
</comment>
<comment type="PTM">
    <text evidence="1 10">Phosphorylated on tyrosine residues by HCK in response to IFNG and bacterial lipopolysaccharide (LPS) (By similarity). Phosphorylated by FYN.</text>
</comment>
<comment type="miscellaneous">
    <text>'Vav' stands for the sixth letter of the Hebrew alphabet.</text>
</comment>
<comment type="sequence caution" evidence="25">
    <conflict type="erroneous initiation">
        <sequence resource="EMBL-CDS" id="BAG62721"/>
    </conflict>
    <text>Truncated N-terminus.</text>
</comment>
<comment type="sequence caution" evidence="25">
    <conflict type="frameshift">
        <sequence resource="EMBL-CDS" id="CAA34383"/>
    </conflict>
</comment>
<comment type="online information" name="Atlas of Genetics and Cytogenetics in Oncology and Haematology">
    <link uri="https://atlasgeneticsoncology.org/gene/195/VAV1"/>
</comment>
<name>VAV_HUMAN</name>
<sequence>MELWRQCTHWLIQCRVLPPSHRVTWDGAQVCELAQALRDGVLLCQLLNNLLPHAINLREVNLRPQMSQFLCLKNIRTFLSTCCEKFGLKRSELFEAFDLFDVQDFGKVIYTLSALSWTPIAQNRGIMPFPTEEESVGDEDIYSGLSDQIDDTVEEDEDLYDCVENEEAEGDEIYEDLMRSEPVSMPPKMTEYDKRCCCLREIQQTEEKYTDTLGSIQQHFLKPLQRFLKPQDIEIIFINIEDLLRVHTHFLKEMKEALGTPGAANLYQVFIKYKERFLVYGRYCSQVESASKHLDRVAAAREDVQMKLEECSQRANNGRFTLRDLLMVPMQRVLKYHLLLQELVKHTQEAMEKENLRLALDAMRDLAQCVNEVKRDNETLRQITNFQLSIENLDQSLAHYGRPKIDGELKITSVERRSKMDRYAFLLDKALLICKRRGDSYDLKDFVNLHSFQVRDDSSGDRDNKKWSHMFLLIEDQGAQGYELFFKTRELKKKWMEQFEMAISNIYPENATANGHDFQMFSFEETTSCKACQMLLRGTFYQGYRCHRCRASAHKECLGRVPPCGRHGQDFPGTMKKDKLHRRAQDKKRNELGLPKMEVFQEYYGLPPPPGAIGPFLRLNPGDIVELTKAEAEQNWWEGRNTSTNEIGWFPCNRVKPYVHGPPQDLSVHLWYAGPMERAGAESILANRSDGTFLVRQRVKDAAEFAISIKYNVEVKHIKIMTAEGLYRITEKKAFRGLTELVEFYQQNSLKDCFKSLDTTLQFPFKEPEKRTISRPAVGSTKYFGTAKARYDFCARDRSELSLKEGDIIKILNKKGQQGWWRGEIYGRVGWFPANYVEEDYSEYC</sequence>
<keyword id="KW-0002">3D-structure</keyword>
<keyword id="KW-0025">Alternative splicing</keyword>
<keyword id="KW-0344">Guanine-nucleotide releasing factor</keyword>
<keyword id="KW-0479">Metal-binding</keyword>
<keyword id="KW-0597">Phosphoprotein</keyword>
<keyword id="KW-1267">Proteomics identification</keyword>
<keyword id="KW-0656">Proto-oncogene</keyword>
<keyword id="KW-1185">Reference proteome</keyword>
<keyword id="KW-0677">Repeat</keyword>
<keyword id="KW-0727">SH2 domain</keyword>
<keyword id="KW-0728">SH3 domain</keyword>
<keyword id="KW-0862">Zinc</keyword>
<keyword id="KW-0863">Zinc-finger</keyword>
<reference key="1">
    <citation type="journal article" date="1991" name="Cell Growth Differ.">
        <title>Mechanism of activation of the vav protooncogene.</title>
        <authorList>
            <person name="Coppola J."/>
            <person name="Bryant S."/>
            <person name="Koda T."/>
            <person name="Conway D."/>
            <person name="Barbacid M."/>
        </authorList>
    </citation>
    <scope>NUCLEOTIDE SEQUENCE [MRNA] (ISOFORM 1)</scope>
    <scope>MUTAGENESIS OF CYS-529</scope>
</reference>
<reference key="2">
    <citation type="journal article" date="2000" name="Biochim. Biophys. Acta">
        <title>Genomic organization and regulation of the vav proto-oncogene.</title>
        <authorList>
            <person name="Denkinger D.J."/>
            <person name="Borges C.R."/>
            <person name="Butler C.L."/>
            <person name="Cushman A.M."/>
            <person name="Kawahara R.S."/>
        </authorList>
    </citation>
    <scope>NUCLEOTIDE SEQUENCE [GENOMIC DNA]</scope>
</reference>
<reference key="3">
    <citation type="journal article" date="2004" name="Nature">
        <title>The DNA sequence and biology of human chromosome 19.</title>
        <authorList>
            <person name="Grimwood J."/>
            <person name="Gordon L.A."/>
            <person name="Olsen A.S."/>
            <person name="Terry A."/>
            <person name="Schmutz J."/>
            <person name="Lamerdin J.E."/>
            <person name="Hellsten U."/>
            <person name="Goodstein D."/>
            <person name="Couronne O."/>
            <person name="Tran-Gyamfi M."/>
            <person name="Aerts A."/>
            <person name="Altherr M."/>
            <person name="Ashworth L."/>
            <person name="Bajorek E."/>
            <person name="Black S."/>
            <person name="Branscomb E."/>
            <person name="Caenepeel S."/>
            <person name="Carrano A.V."/>
            <person name="Caoile C."/>
            <person name="Chan Y.M."/>
            <person name="Christensen M."/>
            <person name="Cleland C.A."/>
            <person name="Copeland A."/>
            <person name="Dalin E."/>
            <person name="Dehal P."/>
            <person name="Denys M."/>
            <person name="Detter J.C."/>
            <person name="Escobar J."/>
            <person name="Flowers D."/>
            <person name="Fotopulos D."/>
            <person name="Garcia C."/>
            <person name="Georgescu A.M."/>
            <person name="Glavina T."/>
            <person name="Gomez M."/>
            <person name="Gonzales E."/>
            <person name="Groza M."/>
            <person name="Hammon N."/>
            <person name="Hawkins T."/>
            <person name="Haydu L."/>
            <person name="Ho I."/>
            <person name="Huang W."/>
            <person name="Israni S."/>
            <person name="Jett J."/>
            <person name="Kadner K."/>
            <person name="Kimball H."/>
            <person name="Kobayashi A."/>
            <person name="Larionov V."/>
            <person name="Leem S.-H."/>
            <person name="Lopez F."/>
            <person name="Lou Y."/>
            <person name="Lowry S."/>
            <person name="Malfatti S."/>
            <person name="Martinez D."/>
            <person name="McCready P.M."/>
            <person name="Medina C."/>
            <person name="Morgan J."/>
            <person name="Nelson K."/>
            <person name="Nolan M."/>
            <person name="Ovcharenko I."/>
            <person name="Pitluck S."/>
            <person name="Pollard M."/>
            <person name="Popkie A.P."/>
            <person name="Predki P."/>
            <person name="Quan G."/>
            <person name="Ramirez L."/>
            <person name="Rash S."/>
            <person name="Retterer J."/>
            <person name="Rodriguez A."/>
            <person name="Rogers S."/>
            <person name="Salamov A."/>
            <person name="Salazar A."/>
            <person name="She X."/>
            <person name="Smith D."/>
            <person name="Slezak T."/>
            <person name="Solovyev V."/>
            <person name="Thayer N."/>
            <person name="Tice H."/>
            <person name="Tsai M."/>
            <person name="Ustaszewska A."/>
            <person name="Vo N."/>
            <person name="Wagner M."/>
            <person name="Wheeler J."/>
            <person name="Wu K."/>
            <person name="Xie G."/>
            <person name="Yang J."/>
            <person name="Dubchak I."/>
            <person name="Furey T.S."/>
            <person name="DeJong P."/>
            <person name="Dickson M."/>
            <person name="Gordon D."/>
            <person name="Eichler E.E."/>
            <person name="Pennacchio L.A."/>
            <person name="Richardson P."/>
            <person name="Stubbs L."/>
            <person name="Rokhsar D.S."/>
            <person name="Myers R.M."/>
            <person name="Rubin E.M."/>
            <person name="Lucas S.M."/>
        </authorList>
    </citation>
    <scope>NUCLEOTIDE SEQUENCE [LARGE SCALE GENOMIC DNA]</scope>
</reference>
<reference key="4">
    <citation type="journal article" date="1991" name="Mol. Cell. Biol.">
        <title>Loss of the amino-terminal helix-loop-helix domain of the vav proto-oncogene activates its transforming potential.</title>
        <authorList>
            <person name="Katzav S."/>
            <person name="Cleveland J.L."/>
            <person name="Heslop H.E."/>
            <person name="Pulido D."/>
        </authorList>
    </citation>
    <scope>NUCLEOTIDE SEQUENCE [GENOMIC DNA] OF 1-61</scope>
</reference>
<reference key="5">
    <citation type="journal article" date="2004" name="Nat. Genet.">
        <title>Complete sequencing and characterization of 21,243 full-length human cDNAs.</title>
        <authorList>
            <person name="Ota T."/>
            <person name="Suzuki Y."/>
            <person name="Nishikawa T."/>
            <person name="Otsuki T."/>
            <person name="Sugiyama T."/>
            <person name="Irie R."/>
            <person name="Wakamatsu A."/>
            <person name="Hayashi K."/>
            <person name="Sato H."/>
            <person name="Nagai K."/>
            <person name="Kimura K."/>
            <person name="Makita H."/>
            <person name="Sekine M."/>
            <person name="Obayashi M."/>
            <person name="Nishi T."/>
            <person name="Shibahara T."/>
            <person name="Tanaka T."/>
            <person name="Ishii S."/>
            <person name="Yamamoto J."/>
            <person name="Saito K."/>
            <person name="Kawai Y."/>
            <person name="Isono Y."/>
            <person name="Nakamura Y."/>
            <person name="Nagahari K."/>
            <person name="Murakami K."/>
            <person name="Yasuda T."/>
            <person name="Iwayanagi T."/>
            <person name="Wagatsuma M."/>
            <person name="Shiratori A."/>
            <person name="Sudo H."/>
            <person name="Hosoiri T."/>
            <person name="Kaku Y."/>
            <person name="Kodaira H."/>
            <person name="Kondo H."/>
            <person name="Sugawara M."/>
            <person name="Takahashi M."/>
            <person name="Kanda K."/>
            <person name="Yokoi T."/>
            <person name="Furuya T."/>
            <person name="Kikkawa E."/>
            <person name="Omura Y."/>
            <person name="Abe K."/>
            <person name="Kamihara K."/>
            <person name="Katsuta N."/>
            <person name="Sato K."/>
            <person name="Tanikawa M."/>
            <person name="Yamazaki M."/>
            <person name="Ninomiya K."/>
            <person name="Ishibashi T."/>
            <person name="Yamashita H."/>
            <person name="Murakawa K."/>
            <person name="Fujimori K."/>
            <person name="Tanai H."/>
            <person name="Kimata M."/>
            <person name="Watanabe M."/>
            <person name="Hiraoka S."/>
            <person name="Chiba Y."/>
            <person name="Ishida S."/>
            <person name="Ono Y."/>
            <person name="Takiguchi S."/>
            <person name="Watanabe S."/>
            <person name="Yosida M."/>
            <person name="Hotuta T."/>
            <person name="Kusano J."/>
            <person name="Kanehori K."/>
            <person name="Takahashi-Fujii A."/>
            <person name="Hara H."/>
            <person name="Tanase T.-O."/>
            <person name="Nomura Y."/>
            <person name="Togiya S."/>
            <person name="Komai F."/>
            <person name="Hara R."/>
            <person name="Takeuchi K."/>
            <person name="Arita M."/>
            <person name="Imose N."/>
            <person name="Musashino K."/>
            <person name="Yuuki H."/>
            <person name="Oshima A."/>
            <person name="Sasaki N."/>
            <person name="Aotsuka S."/>
            <person name="Yoshikawa Y."/>
            <person name="Matsunawa H."/>
            <person name="Ichihara T."/>
            <person name="Shiohata N."/>
            <person name="Sano S."/>
            <person name="Moriya S."/>
            <person name="Momiyama H."/>
            <person name="Satoh N."/>
            <person name="Takami S."/>
            <person name="Terashima Y."/>
            <person name="Suzuki O."/>
            <person name="Nakagawa S."/>
            <person name="Senoh A."/>
            <person name="Mizoguchi H."/>
            <person name="Goto Y."/>
            <person name="Shimizu F."/>
            <person name="Wakebe H."/>
            <person name="Hishigaki H."/>
            <person name="Watanabe T."/>
            <person name="Sugiyama A."/>
            <person name="Takemoto M."/>
            <person name="Kawakami B."/>
            <person name="Yamazaki M."/>
            <person name="Watanabe K."/>
            <person name="Kumagai A."/>
            <person name="Itakura S."/>
            <person name="Fukuzumi Y."/>
            <person name="Fujimori Y."/>
            <person name="Komiyama M."/>
            <person name="Tashiro H."/>
            <person name="Tanigami A."/>
            <person name="Fujiwara T."/>
            <person name="Ono T."/>
            <person name="Yamada K."/>
            <person name="Fujii Y."/>
            <person name="Ozaki K."/>
            <person name="Hirao M."/>
            <person name="Ohmori Y."/>
            <person name="Kawabata A."/>
            <person name="Hikiji T."/>
            <person name="Kobatake N."/>
            <person name="Inagaki H."/>
            <person name="Ikema Y."/>
            <person name="Okamoto S."/>
            <person name="Okitani R."/>
            <person name="Kawakami T."/>
            <person name="Noguchi S."/>
            <person name="Itoh T."/>
            <person name="Shigeta K."/>
            <person name="Senba T."/>
            <person name="Matsumura K."/>
            <person name="Nakajima Y."/>
            <person name="Mizuno T."/>
            <person name="Morinaga M."/>
            <person name="Sasaki M."/>
            <person name="Togashi T."/>
            <person name="Oyama M."/>
            <person name="Hata H."/>
            <person name="Watanabe M."/>
            <person name="Komatsu T."/>
            <person name="Mizushima-Sugano J."/>
            <person name="Satoh T."/>
            <person name="Shirai Y."/>
            <person name="Takahashi Y."/>
            <person name="Nakagawa K."/>
            <person name="Okumura K."/>
            <person name="Nagase T."/>
            <person name="Nomura N."/>
            <person name="Kikuchi H."/>
            <person name="Masuho Y."/>
            <person name="Yamashita R."/>
            <person name="Nakai K."/>
            <person name="Yada T."/>
            <person name="Nakamura Y."/>
            <person name="Ohara O."/>
            <person name="Isogai T."/>
            <person name="Sugano S."/>
        </authorList>
    </citation>
    <scope>NUCLEOTIDE SEQUENCE [LARGE SCALE MRNA] OF 51-813 (ISOFORM 2)</scope>
    <source>
        <tissue>Spleen</tissue>
    </source>
</reference>
<reference key="6">
    <citation type="journal article" date="1989" name="EMBO J.">
        <title>vav, a novel human oncogene derived from a locus ubiquitously expressed in hematopoietic cells.</title>
        <authorList>
            <person name="Katzav S."/>
            <person name="Martin-Zanca D."/>
            <person name="Barbacid M."/>
        </authorList>
    </citation>
    <scope>NUCLEOTIDE SEQUENCE [MRNA] OF 68-845 (ISOFORM 1)</scope>
</reference>
<reference key="7">
    <citation type="submission" date="1995-01" db="EMBL/GenBank/DDBJ databases">
        <authorList>
            <person name="Romero F."/>
        </authorList>
    </citation>
    <scope>NUCLEOTIDE SEQUENCE [MRNA] OF 299-837 (ISOFORM 1)</scope>
</reference>
<reference key="8">
    <citation type="journal article" date="1995" name="Oncogene">
        <title>The proline-rich region of Vav binds to Grb2 and Grb3-3.</title>
        <authorList>
            <person name="Ramos-Morales F."/>
            <person name="Romero F."/>
            <person name="Schweighoffer F."/>
            <person name="Bismuth G."/>
            <person name="Camonis J."/>
            <person name="Tortolero M."/>
            <person name="Fischer S."/>
        </authorList>
    </citation>
    <scope>NUCLEOTIDE SEQUENCE [MRNA] OF 299-334 (ISOFORM 1)</scope>
</reference>
<reference key="9">
    <citation type="journal article" date="1992" name="Oncogene">
        <title>The hematopoietically expressed vav proto-oncogene shares homology with the dbl GDP-GTP exchange factor, the bcr gene and a yeast gene (CDC24) involved in cytoskeletal organization.</title>
        <authorList>
            <person name="Adams J.M."/>
            <person name="Houston H."/>
            <person name="Allen J."/>
            <person name="Lints T."/>
            <person name="Harvey R."/>
        </authorList>
    </citation>
    <scope>SIMILARITY TO CDC24 FAMILY</scope>
</reference>
<reference key="10">
    <citation type="journal article" date="1996" name="Immunity">
        <title>Functional and physical interactions of Syk family kinases with the Vav proto-oncogene product.</title>
        <authorList>
            <person name="Deckert M."/>
            <person name="Tartare-Deckert S."/>
            <person name="Couture C."/>
            <person name="Mustelin T."/>
            <person name="Altman A."/>
        </authorList>
    </citation>
    <scope>INTERACTION WITH SYK</scope>
    <scope>MUTAGENESIS OF ARG-696</scope>
</reference>
<reference key="11">
    <citation type="journal article" date="1996" name="Immunity">
        <title>Vav and SLP-76 interact and functionally cooperate in IL-2 gene activation.</title>
        <authorList>
            <person name="Wu J."/>
            <person name="Motto D.G."/>
            <person name="Koretzky G.A."/>
            <person name="Weiss A."/>
        </authorList>
    </citation>
    <scope>FUNCTION</scope>
    <scope>INTERACTION WITH LCP2</scope>
</reference>
<reference key="12">
    <citation type="journal article" date="1997" name="Oncogene">
        <title>Cbl-b, a member of the Sli-1/c-Cbl protein family, inhibits Vav-mediated c-Jun N-terminal kinase activation.</title>
        <authorList>
            <person name="Bustelo X.R."/>
            <person name="Crespo P."/>
            <person name="Lopez-Barahona M."/>
            <person name="Gutkind J.S."/>
            <person name="Barbacid M."/>
        </authorList>
    </citation>
    <scope>INTERACTION WITH CBLB</scope>
</reference>
<reference key="13">
    <citation type="journal article" date="1998" name="Immunity">
        <title>BLNK: a central linker protein in B cell activation.</title>
        <authorList>
            <person name="Fu C."/>
            <person name="Turck C.W."/>
            <person name="Kurosaki T."/>
            <person name="Chan A.C."/>
        </authorList>
    </citation>
    <scope>INTERACTION WITH BLNK; PLCG1; GRB2 AND NCK1</scope>
</reference>
<reference key="14">
    <citation type="journal article" date="1999" name="Mol. Cell. Biol.">
        <title>hSiah2 is a new Vav binding protein which inhibits Vav-mediated signaling pathways.</title>
        <authorList>
            <person name="Germani A."/>
            <person name="Romero F."/>
            <person name="Houlard M."/>
            <person name="Camonis J."/>
            <person name="Gisselbrecht S."/>
            <person name="Fischer S."/>
            <person name="Varin-Blank N."/>
        </authorList>
    </citation>
    <scope>INTERACTION WITH SIAH2</scope>
</reference>
<reference key="15">
    <citation type="journal article" date="2000" name="Proc. Natl. Acad. Sci. U.S.A.">
        <title>T-cell receptor antagonists induce Vav phosphorylation by selective activation of Fyn kinase.</title>
        <authorList>
            <person name="Huang J."/>
            <person name="Tilly D."/>
            <person name="Altman A."/>
            <person name="Sugie K."/>
            <person name="Grey H.M."/>
        </authorList>
    </citation>
    <scope>PHOSPHORYLATION BY FYN</scope>
</reference>
<reference key="16">
    <citation type="journal article" date="2002" name="Blood">
        <title>DOCK2 associates with CrkL and regulates Rac1 in human leukemia cell lines.</title>
        <authorList>
            <person name="Nishihara H."/>
            <person name="Maeda M."/>
            <person name="Oda A."/>
            <person name="Tsuda M."/>
            <person name="Sawa H."/>
            <person name="Nagashima K."/>
            <person name="Tanaka S."/>
        </authorList>
    </citation>
    <scope>INTERACTION WITH DOCK2</scope>
</reference>
<reference key="17">
    <citation type="journal article" date="2002" name="Eur. J. Biochem.">
        <title>Shb links SLP-76 and Vav with the CD3 complex in Jurkat T cells.</title>
        <authorList>
            <person name="Lindholm C.K."/>
            <person name="Henriksson M.L."/>
            <person name="Hallberg B."/>
            <person name="Welsh M."/>
        </authorList>
    </citation>
    <scope>INTERACTION WITH SHB</scope>
</reference>
<reference key="18">
    <citation type="journal article" date="2002" name="Oncogene">
        <title>Adaptor protein APS binds the NH2-terminal autoinhibitory domain of guanine nucleotide exchange factor Vav3 and augments its activity.</title>
        <authorList>
            <person name="Yabana N."/>
            <person name="Shibuya M."/>
        </authorList>
    </citation>
    <scope>INTERACTION WITH SH2B2</scope>
</reference>
<reference key="19">
    <citation type="journal article" date="2005" name="J. Immunol.">
        <title>Kinase-independent functions for Itk in TCR-induced regulation of Vav and the actin cytoskeleton.</title>
        <authorList>
            <person name="Dombroski D."/>
            <person name="Houghtling R.A."/>
            <person name="Labno C.M."/>
            <person name="Precht P."/>
            <person name="Takesono A."/>
            <person name="Caplen N.J."/>
            <person name="Billadeau D.D."/>
            <person name="Wange R.L."/>
            <person name="Burkhardt J.K."/>
            <person name="Schwartzberg P.L."/>
        </authorList>
    </citation>
    <scope>INTERACTION WITH ITK</scope>
</reference>
<reference key="20">
    <citation type="journal article" date="2005" name="Mol. Endocrinol.">
        <title>Novel association of Vav2 and Nek3 modulates signaling through the human prolactin receptor.</title>
        <authorList>
            <person name="Miller S.L."/>
            <person name="DeMaria J.E."/>
            <person name="Freier D.O."/>
            <person name="Riegel A.M."/>
            <person name="Clevenger C.V."/>
        </authorList>
    </citation>
    <scope>INTERACTION WITH NEK3</scope>
</reference>
<reference key="21">
    <citation type="journal article" date="2005" name="Nat. Biotechnol.">
        <title>Immunoaffinity profiling of tyrosine phosphorylation in cancer cells.</title>
        <authorList>
            <person name="Rush J."/>
            <person name="Moritz A."/>
            <person name="Lee K.A."/>
            <person name="Guo A."/>
            <person name="Goss V.L."/>
            <person name="Spek E.J."/>
            <person name="Zhang H."/>
            <person name="Zha X.-M."/>
            <person name="Polakiewicz R.D."/>
            <person name="Comb M.J."/>
        </authorList>
    </citation>
    <scope>PHOSPHORYLATION [LARGE SCALE ANALYSIS] AT TYR-826</scope>
    <scope>IDENTIFICATION BY MASS SPECTROMETRY [LARGE SCALE ANALYSIS]</scope>
</reference>
<reference key="22">
    <citation type="journal article" date="2005" name="Oncogene">
        <title>Characterization of VIK-1: a new Vav-interacting Kruppel-like protein.</title>
        <authorList>
            <person name="Houlard M."/>
            <person name="Romero-Portillo F."/>
            <person name="Germani A."/>
            <person name="Depaux A."/>
            <person name="Regnier-Ricard F."/>
            <person name="Gisselbrecht S."/>
            <person name="Varin-Blank N."/>
        </authorList>
    </citation>
    <scope>INTERACTION WITH ZNF655/VIK</scope>
</reference>
<reference key="23">
    <citation type="journal article" date="2009" name="Biochem. J.">
        <title>A Pyk2-Vav1 complex is recruited to beta3-adhesion sites to initiate Rho activation.</title>
        <authorList>
            <person name="Gao C."/>
            <person name="Blystone S.D."/>
        </authorList>
    </citation>
    <scope>INTERACTION WITH PTK2B/PYK2</scope>
</reference>
<reference key="24">
    <citation type="journal article" date="2011" name="BMC Syst. Biol.">
        <title>Initial characterization of the human central proteome.</title>
        <authorList>
            <person name="Burkard T.R."/>
            <person name="Planyavsky M."/>
            <person name="Kaupe I."/>
            <person name="Breitwieser F.P."/>
            <person name="Buerckstuemmer T."/>
            <person name="Bennett K.L."/>
            <person name="Superti-Furga G."/>
            <person name="Colinge J."/>
        </authorList>
    </citation>
    <scope>IDENTIFICATION BY MASS SPECTROMETRY [LARGE SCALE ANALYSIS]</scope>
</reference>
<reference key="25">
    <citation type="journal article" date="2016" name="Sci. Signal.">
        <title>A large Rab GTPase encoded by CRACR2A is a component of subsynaptic vesicles that transmit T cell activation signals.</title>
        <authorList>
            <person name="Srikanth S."/>
            <person name="Kim K.D."/>
            <person name="Gao Y."/>
            <person name="Woo J.S."/>
            <person name="Ghosh S."/>
            <person name="Calmettes G."/>
            <person name="Paz A."/>
            <person name="Abramson J."/>
            <person name="Jiang M."/>
            <person name="Gwack Y."/>
        </authorList>
    </citation>
    <scope>INTERACTION WITH CRACR2A</scope>
</reference>
<reference key="26">
    <citation type="submission" date="2005-11" db="PDB data bank">
        <title>Solution structure of the SH2 domain of human proto-oncogene protein VAV1.</title>
        <authorList>
            <consortium name="RIKEN structural genomics initiative (RSGI)"/>
        </authorList>
    </citation>
    <scope>STRUCTURE BY NMR OF 661-775</scope>
</reference>
<evidence type="ECO:0000250" key="1"/>
<evidence type="ECO:0000250" key="2">
    <source>
        <dbReference type="UniProtKB" id="P27870"/>
    </source>
</evidence>
<evidence type="ECO:0000255" key="3">
    <source>
        <dbReference type="PROSITE-ProRule" id="PRU00044"/>
    </source>
</evidence>
<evidence type="ECO:0000255" key="4">
    <source>
        <dbReference type="PROSITE-ProRule" id="PRU00062"/>
    </source>
</evidence>
<evidence type="ECO:0000255" key="5">
    <source>
        <dbReference type="PROSITE-ProRule" id="PRU00145"/>
    </source>
</evidence>
<evidence type="ECO:0000255" key="6">
    <source>
        <dbReference type="PROSITE-ProRule" id="PRU00191"/>
    </source>
</evidence>
<evidence type="ECO:0000255" key="7">
    <source>
        <dbReference type="PROSITE-ProRule" id="PRU00192"/>
    </source>
</evidence>
<evidence type="ECO:0000255" key="8">
    <source>
        <dbReference type="PROSITE-ProRule" id="PRU00226"/>
    </source>
</evidence>
<evidence type="ECO:0000269" key="9">
    <source>
    </source>
</evidence>
<evidence type="ECO:0000269" key="10">
    <source>
    </source>
</evidence>
<evidence type="ECO:0000269" key="11">
    <source>
    </source>
</evidence>
<evidence type="ECO:0000269" key="12">
    <source>
    </source>
</evidence>
<evidence type="ECO:0000269" key="13">
    <source>
    </source>
</evidence>
<evidence type="ECO:0000269" key="14">
    <source>
    </source>
</evidence>
<evidence type="ECO:0000269" key="15">
    <source>
    </source>
</evidence>
<evidence type="ECO:0000269" key="16">
    <source>
    </source>
</evidence>
<evidence type="ECO:0000269" key="17">
    <source>
    </source>
</evidence>
<evidence type="ECO:0000269" key="18">
    <source>
    </source>
</evidence>
<evidence type="ECO:0000269" key="19">
    <source>
    </source>
</evidence>
<evidence type="ECO:0000269" key="20">
    <source>
    </source>
</evidence>
<evidence type="ECO:0000269" key="21">
    <source>
    </source>
</evidence>
<evidence type="ECO:0000269" key="22">
    <source>
    </source>
</evidence>
<evidence type="ECO:0000269" key="23">
    <source>
    </source>
</evidence>
<evidence type="ECO:0000303" key="24">
    <source>
    </source>
</evidence>
<evidence type="ECO:0000305" key="25"/>
<evidence type="ECO:0007744" key="26">
    <source>
    </source>
</evidence>
<evidence type="ECO:0007829" key="27">
    <source>
        <dbReference type="PDB" id="2CRH"/>
    </source>
</evidence>
<evidence type="ECO:0007829" key="28">
    <source>
        <dbReference type="PDB" id="2LCT"/>
    </source>
</evidence>
<evidence type="ECO:0007829" key="29">
    <source>
        <dbReference type="PDB" id="6NEW"/>
    </source>
</evidence>
<evidence type="ECO:0007829" key="30">
    <source>
        <dbReference type="PDB" id="6NF1"/>
    </source>
</evidence>
<proteinExistence type="evidence at protein level"/>
<accession>P15498</accession>
<accession>B4DVK9</accession>
<accession>M0QXX6</accession>
<accession>Q15860</accession>
<gene>
    <name type="primary">VAV1</name>
    <name type="synonym">VAV</name>
</gene>
<protein>
    <recommendedName>
        <fullName>Proto-oncogene vav</fullName>
    </recommendedName>
</protein>
<feature type="chain" id="PRO_0000080980" description="Proto-oncogene vav">
    <location>
        <begin position="1"/>
        <end position="845"/>
    </location>
</feature>
<feature type="domain" description="Calponin-homology (CH)" evidence="3">
    <location>
        <begin position="1"/>
        <end position="119"/>
    </location>
</feature>
<feature type="domain" description="DH" evidence="4">
    <location>
        <begin position="194"/>
        <end position="373"/>
    </location>
</feature>
<feature type="domain" description="PH" evidence="5">
    <location>
        <begin position="402"/>
        <end position="504"/>
    </location>
</feature>
<feature type="domain" description="SH3 1" evidence="7">
    <location>
        <begin position="592"/>
        <end position="660"/>
    </location>
</feature>
<feature type="domain" description="SH2" evidence="6">
    <location>
        <begin position="671"/>
        <end position="765"/>
    </location>
</feature>
<feature type="domain" description="SH3 2" evidence="7">
    <location>
        <begin position="782"/>
        <end position="842"/>
    </location>
</feature>
<feature type="zinc finger region" description="Phorbol-ester/DAG-type" evidence="8">
    <location>
        <begin position="515"/>
        <end position="564"/>
    </location>
</feature>
<feature type="modified residue" description="Phosphotyrosine" evidence="26">
    <location>
        <position position="826"/>
    </location>
</feature>
<feature type="modified residue" description="Phosphotyrosine" evidence="2">
    <location>
        <position position="844"/>
    </location>
</feature>
<feature type="splice variant" id="VSP_047563" description="In isoform 2." evidence="24">
    <location>
        <begin position="187"/>
        <end position="218"/>
    </location>
</feature>
<feature type="sequence variant" id="VAR_051997" description="In dbSNP:rs36097961.">
    <original>T</original>
    <variation>M</variation>
    <location>
        <position position="739"/>
    </location>
</feature>
<feature type="mutagenesis site" description="Abolishes transforming activity." evidence="18">
    <original>C</original>
    <variation>R</variation>
    <location>
        <position position="529"/>
    </location>
</feature>
<feature type="mutagenesis site" description="Loss of interaction with SYK." evidence="21">
    <original>R</original>
    <variation>L</variation>
    <location>
        <position position="696"/>
    </location>
</feature>
<feature type="sequence conflict" description="In Ref. 6; CAA34383." evidence="25" ref="6">
    <original>A</original>
    <variation>P</variation>
    <location>
        <position position="264"/>
    </location>
</feature>
<feature type="sequence conflict" description="In Ref. 5; BAG62721." evidence="25" ref="5">
    <original>Q</original>
    <variation>R</variation>
    <location>
        <position position="368"/>
    </location>
</feature>
<feature type="sequence conflict" description="In Ref. 6." evidence="25" ref="6">
    <original>I</original>
    <variation>TV</variation>
    <location>
        <position position="718"/>
    </location>
</feature>
<feature type="helix" evidence="30">
    <location>
        <begin position="3"/>
        <end position="13"/>
    </location>
</feature>
<feature type="turn" evidence="30">
    <location>
        <begin position="22"/>
        <end position="24"/>
    </location>
</feature>
<feature type="helix" evidence="30">
    <location>
        <begin position="30"/>
        <end position="37"/>
    </location>
</feature>
<feature type="helix" evidence="30">
    <location>
        <begin position="41"/>
        <end position="50"/>
    </location>
</feature>
<feature type="helix" evidence="30">
    <location>
        <begin position="57"/>
        <end position="59"/>
    </location>
</feature>
<feature type="helix" evidence="30">
    <location>
        <begin position="68"/>
        <end position="84"/>
    </location>
</feature>
<feature type="turn" evidence="30">
    <location>
        <begin position="90"/>
        <end position="92"/>
    </location>
</feature>
<feature type="helix" evidence="30">
    <location>
        <begin position="96"/>
        <end position="100"/>
    </location>
</feature>
<feature type="helix" evidence="30">
    <location>
        <begin position="105"/>
        <end position="116"/>
    </location>
</feature>
<feature type="helix" evidence="30">
    <location>
        <begin position="119"/>
        <end position="122"/>
    </location>
</feature>
<feature type="turn" evidence="30">
    <location>
        <begin position="123"/>
        <end position="125"/>
    </location>
</feature>
<feature type="helix" evidence="30">
    <location>
        <begin position="145"/>
        <end position="148"/>
    </location>
</feature>
<feature type="helix" evidence="30">
    <location>
        <begin position="158"/>
        <end position="160"/>
    </location>
</feature>
<feature type="helix" evidence="29">
    <location>
        <begin position="173"/>
        <end position="177"/>
    </location>
</feature>
<feature type="helix" evidence="29">
    <location>
        <begin position="191"/>
        <end position="219"/>
    </location>
</feature>
<feature type="helix" evidence="29">
    <location>
        <begin position="221"/>
        <end position="225"/>
    </location>
</feature>
<feature type="helix" evidence="29">
    <location>
        <begin position="230"/>
        <end position="236"/>
    </location>
</feature>
<feature type="helix" evidence="29">
    <location>
        <begin position="240"/>
        <end position="259"/>
    </location>
</feature>
<feature type="helix" evidence="29">
    <location>
        <begin position="261"/>
        <end position="263"/>
    </location>
</feature>
<feature type="helix" evidence="29">
    <location>
        <begin position="266"/>
        <end position="273"/>
    </location>
</feature>
<feature type="helix" evidence="29">
    <location>
        <begin position="276"/>
        <end position="278"/>
    </location>
</feature>
<feature type="helix" evidence="29">
    <location>
        <begin position="279"/>
        <end position="285"/>
    </location>
</feature>
<feature type="helix" evidence="29">
    <location>
        <begin position="287"/>
        <end position="300"/>
    </location>
</feature>
<feature type="helix" evidence="29">
    <location>
        <begin position="302"/>
        <end position="316"/>
    </location>
</feature>
<feature type="strand" evidence="30">
    <location>
        <begin position="317"/>
        <end position="319"/>
    </location>
</feature>
<feature type="helix" evidence="29">
    <location>
        <begin position="322"/>
        <end position="325"/>
    </location>
</feature>
<feature type="helix" evidence="29">
    <location>
        <begin position="328"/>
        <end position="333"/>
    </location>
</feature>
<feature type="helix" evidence="29">
    <location>
        <begin position="336"/>
        <end position="345"/>
    </location>
</feature>
<feature type="helix" evidence="29">
    <location>
        <begin position="350"/>
        <end position="389"/>
    </location>
</feature>
<feature type="strand" evidence="29">
    <location>
        <begin position="390"/>
        <end position="392"/>
    </location>
</feature>
<feature type="helix" evidence="29">
    <location>
        <begin position="397"/>
        <end position="400"/>
    </location>
</feature>
<feature type="strand" evidence="29">
    <location>
        <begin position="403"/>
        <end position="412"/>
    </location>
</feature>
<feature type="strand" evidence="29">
    <location>
        <begin position="420"/>
        <end position="437"/>
    </location>
</feature>
<feature type="strand" evidence="29">
    <location>
        <begin position="440"/>
        <end position="448"/>
    </location>
</feature>
<feature type="helix" evidence="29">
    <location>
        <begin position="449"/>
        <end position="451"/>
    </location>
</feature>
<feature type="strand" evidence="29">
    <location>
        <begin position="452"/>
        <end position="456"/>
    </location>
</feature>
<feature type="helix" evidence="29">
    <location>
        <begin position="458"/>
        <end position="460"/>
    </location>
</feature>
<feature type="turn" evidence="29">
    <location>
        <begin position="461"/>
        <end position="463"/>
    </location>
</feature>
<feature type="strand" evidence="29">
    <location>
        <begin position="469"/>
        <end position="475"/>
    </location>
</feature>
<feature type="strand" evidence="29">
    <location>
        <begin position="481"/>
        <end position="488"/>
    </location>
</feature>
<feature type="helix" evidence="29">
    <location>
        <begin position="489"/>
        <end position="506"/>
    </location>
</feature>
<feature type="turn" evidence="29">
    <location>
        <begin position="509"/>
        <end position="512"/>
    </location>
</feature>
<feature type="helix" evidence="29">
    <location>
        <begin position="513"/>
        <end position="515"/>
    </location>
</feature>
<feature type="strand" evidence="29">
    <location>
        <begin position="518"/>
        <end position="521"/>
    </location>
</feature>
<feature type="turn" evidence="29">
    <location>
        <begin position="530"/>
        <end position="532"/>
    </location>
</feature>
<feature type="strand" evidence="29">
    <location>
        <begin position="538"/>
        <end position="540"/>
    </location>
</feature>
<feature type="strand" evidence="29">
    <location>
        <begin position="543"/>
        <end position="546"/>
    </location>
</feature>
<feature type="turn" evidence="29">
    <location>
        <begin position="547"/>
        <end position="549"/>
    </location>
</feature>
<feature type="helix" evidence="29">
    <location>
        <begin position="555"/>
        <end position="560"/>
    </location>
</feature>
<feature type="helix" evidence="27">
    <location>
        <begin position="666"/>
        <end position="668"/>
    </location>
</feature>
<feature type="strand" evidence="27">
    <location>
        <begin position="669"/>
        <end position="672"/>
    </location>
</feature>
<feature type="helix" evidence="27">
    <location>
        <begin position="678"/>
        <end position="684"/>
    </location>
</feature>
<feature type="turn" evidence="27">
    <location>
        <begin position="685"/>
        <end position="687"/>
    </location>
</feature>
<feature type="strand" evidence="27">
    <location>
        <begin position="692"/>
        <end position="696"/>
    </location>
</feature>
<feature type="strand" evidence="28">
    <location>
        <begin position="700"/>
        <end position="702"/>
    </location>
</feature>
<feature type="strand" evidence="27">
    <location>
        <begin position="706"/>
        <end position="711"/>
    </location>
</feature>
<feature type="strand" evidence="27">
    <location>
        <begin position="714"/>
        <end position="719"/>
    </location>
</feature>
<feature type="strand" evidence="27">
    <location>
        <begin position="721"/>
        <end position="723"/>
    </location>
</feature>
<feature type="strand" evidence="27">
    <location>
        <begin position="726"/>
        <end position="730"/>
    </location>
</feature>
<feature type="strand" evidence="27">
    <location>
        <begin position="735"/>
        <end position="737"/>
    </location>
</feature>
<feature type="helix" evidence="27">
    <location>
        <begin position="738"/>
        <end position="745"/>
    </location>
</feature>
<feature type="helix" evidence="27">
    <location>
        <begin position="750"/>
        <end position="752"/>
    </location>
</feature>
<feature type="strand" evidence="28">
    <location>
        <begin position="754"/>
        <end position="756"/>
    </location>
</feature>
<feature type="strand" evidence="27">
    <location>
        <begin position="763"/>
        <end position="766"/>
    </location>
</feature>
<organism>
    <name type="scientific">Homo sapiens</name>
    <name type="common">Human</name>
    <dbReference type="NCBI Taxonomy" id="9606"/>
    <lineage>
        <taxon>Eukaryota</taxon>
        <taxon>Metazoa</taxon>
        <taxon>Chordata</taxon>
        <taxon>Craniata</taxon>
        <taxon>Vertebrata</taxon>
        <taxon>Euteleostomi</taxon>
        <taxon>Mammalia</taxon>
        <taxon>Eutheria</taxon>
        <taxon>Euarchontoglires</taxon>
        <taxon>Primates</taxon>
        <taxon>Haplorrhini</taxon>
        <taxon>Catarrhini</taxon>
        <taxon>Hominidae</taxon>
        <taxon>Homo</taxon>
    </lineage>
</organism>
<dbReference type="EMBL" id="AF030227">
    <property type="protein sequence ID" value="AAC25011.1"/>
    <property type="molecule type" value="Genomic_DNA"/>
</dbReference>
<dbReference type="EMBL" id="AF030201">
    <property type="protein sequence ID" value="AAC25011.1"/>
    <property type="status" value="JOINED"/>
    <property type="molecule type" value="Genomic_DNA"/>
</dbReference>
<dbReference type="EMBL" id="AF030202">
    <property type="protein sequence ID" value="AAC25011.1"/>
    <property type="status" value="JOINED"/>
    <property type="molecule type" value="Genomic_DNA"/>
</dbReference>
<dbReference type="EMBL" id="AF030203">
    <property type="protein sequence ID" value="AAC25011.1"/>
    <property type="status" value="JOINED"/>
    <property type="molecule type" value="Genomic_DNA"/>
</dbReference>
<dbReference type="EMBL" id="AF030204">
    <property type="protein sequence ID" value="AAC25011.1"/>
    <property type="status" value="JOINED"/>
    <property type="molecule type" value="Genomic_DNA"/>
</dbReference>
<dbReference type="EMBL" id="AF030205">
    <property type="protein sequence ID" value="AAC25011.1"/>
    <property type="status" value="JOINED"/>
    <property type="molecule type" value="Genomic_DNA"/>
</dbReference>
<dbReference type="EMBL" id="AF030206">
    <property type="protein sequence ID" value="AAC25011.1"/>
    <property type="status" value="JOINED"/>
    <property type="molecule type" value="Genomic_DNA"/>
</dbReference>
<dbReference type="EMBL" id="AF030207">
    <property type="protein sequence ID" value="AAC25011.1"/>
    <property type="status" value="JOINED"/>
    <property type="molecule type" value="Genomic_DNA"/>
</dbReference>
<dbReference type="EMBL" id="AF030208">
    <property type="protein sequence ID" value="AAC25011.1"/>
    <property type="status" value="JOINED"/>
    <property type="molecule type" value="Genomic_DNA"/>
</dbReference>
<dbReference type="EMBL" id="AF030209">
    <property type="protein sequence ID" value="AAC25011.1"/>
    <property type="status" value="JOINED"/>
    <property type="molecule type" value="Genomic_DNA"/>
</dbReference>
<dbReference type="EMBL" id="AF030210">
    <property type="protein sequence ID" value="AAC25011.1"/>
    <property type="status" value="JOINED"/>
    <property type="molecule type" value="Genomic_DNA"/>
</dbReference>
<dbReference type="EMBL" id="AF030211">
    <property type="protein sequence ID" value="AAC25011.1"/>
    <property type="status" value="JOINED"/>
    <property type="molecule type" value="Genomic_DNA"/>
</dbReference>
<dbReference type="EMBL" id="AF030212">
    <property type="protein sequence ID" value="AAC25011.1"/>
    <property type="status" value="JOINED"/>
    <property type="molecule type" value="Genomic_DNA"/>
</dbReference>
<dbReference type="EMBL" id="AF030213">
    <property type="protein sequence ID" value="AAC25011.1"/>
    <property type="status" value="JOINED"/>
    <property type="molecule type" value="Genomic_DNA"/>
</dbReference>
<dbReference type="EMBL" id="AF030214">
    <property type="protein sequence ID" value="AAC25011.1"/>
    <property type="status" value="JOINED"/>
    <property type="molecule type" value="Genomic_DNA"/>
</dbReference>
<dbReference type="EMBL" id="AF030215">
    <property type="protein sequence ID" value="AAC25011.1"/>
    <property type="status" value="JOINED"/>
    <property type="molecule type" value="Genomic_DNA"/>
</dbReference>
<dbReference type="EMBL" id="AF030216">
    <property type="protein sequence ID" value="AAC25011.1"/>
    <property type="status" value="JOINED"/>
    <property type="molecule type" value="Genomic_DNA"/>
</dbReference>
<dbReference type="EMBL" id="AF030217">
    <property type="protein sequence ID" value="AAC25011.1"/>
    <property type="status" value="JOINED"/>
    <property type="molecule type" value="Genomic_DNA"/>
</dbReference>
<dbReference type="EMBL" id="AF030218">
    <property type="protein sequence ID" value="AAC25011.1"/>
    <property type="status" value="JOINED"/>
    <property type="molecule type" value="Genomic_DNA"/>
</dbReference>
<dbReference type="EMBL" id="AF030219">
    <property type="protein sequence ID" value="AAC25011.1"/>
    <property type="status" value="JOINED"/>
    <property type="molecule type" value="Genomic_DNA"/>
</dbReference>
<dbReference type="EMBL" id="AF030220">
    <property type="protein sequence ID" value="AAC25011.1"/>
    <property type="status" value="JOINED"/>
    <property type="molecule type" value="Genomic_DNA"/>
</dbReference>
<dbReference type="EMBL" id="AF030221">
    <property type="protein sequence ID" value="AAC25011.1"/>
    <property type="status" value="JOINED"/>
    <property type="molecule type" value="Genomic_DNA"/>
</dbReference>
<dbReference type="EMBL" id="AF030222">
    <property type="protein sequence ID" value="AAC25011.1"/>
    <property type="status" value="JOINED"/>
    <property type="molecule type" value="Genomic_DNA"/>
</dbReference>
<dbReference type="EMBL" id="AF030223">
    <property type="protein sequence ID" value="AAC25011.1"/>
    <property type="status" value="JOINED"/>
    <property type="molecule type" value="Genomic_DNA"/>
</dbReference>
<dbReference type="EMBL" id="AF030224">
    <property type="protein sequence ID" value="AAC25011.1"/>
    <property type="status" value="JOINED"/>
    <property type="molecule type" value="Genomic_DNA"/>
</dbReference>
<dbReference type="EMBL" id="AF030225">
    <property type="protein sequence ID" value="AAC25011.1"/>
    <property type="status" value="JOINED"/>
    <property type="molecule type" value="Genomic_DNA"/>
</dbReference>
<dbReference type="EMBL" id="AF030226">
    <property type="protein sequence ID" value="AAC25011.1"/>
    <property type="status" value="JOINED"/>
    <property type="molecule type" value="Genomic_DNA"/>
</dbReference>
<dbReference type="EMBL" id="AC010647">
    <property type="status" value="NOT_ANNOTATED_CDS"/>
    <property type="molecule type" value="Genomic_DNA"/>
</dbReference>
<dbReference type="EMBL" id="AC020895">
    <property type="status" value="NOT_ANNOTATED_CDS"/>
    <property type="molecule type" value="Genomic_DNA"/>
</dbReference>
<dbReference type="EMBL" id="AC020954">
    <property type="status" value="NOT_ANNOTATED_CDS"/>
    <property type="molecule type" value="Genomic_DNA"/>
</dbReference>
<dbReference type="EMBL" id="AC022156">
    <property type="status" value="NOT_ANNOTATED_CDS"/>
    <property type="molecule type" value="Genomic_DNA"/>
</dbReference>
<dbReference type="EMBL" id="M59834">
    <property type="protein sequence ID" value="AAA63267.1"/>
    <property type="molecule type" value="Genomic_DNA"/>
</dbReference>
<dbReference type="EMBL" id="AK301128">
    <property type="protein sequence ID" value="BAG62721.1"/>
    <property type="status" value="ALT_INIT"/>
    <property type="molecule type" value="mRNA"/>
</dbReference>
<dbReference type="EMBL" id="X16316">
    <property type="protein sequence ID" value="CAA34383.1"/>
    <property type="status" value="ALT_FRAME"/>
    <property type="molecule type" value="mRNA"/>
</dbReference>
<dbReference type="EMBL" id="X83931">
    <property type="protein sequence ID" value="CAA58783.1"/>
    <property type="molecule type" value="mRNA"/>
</dbReference>
<dbReference type="CCDS" id="CCDS12174.1">
    <molecule id="P15498-1"/>
</dbReference>
<dbReference type="CCDS" id="CCDS59342.1">
    <molecule id="P15498-2"/>
</dbReference>
<dbReference type="PIR" id="B39576">
    <property type="entry name" value="TVHUVV"/>
</dbReference>
<dbReference type="RefSeq" id="NP_001245136.1">
    <molecule id="P15498-2"/>
    <property type="nucleotide sequence ID" value="NM_001258207.2"/>
</dbReference>
<dbReference type="RefSeq" id="NP_005419.2">
    <molecule id="P15498-1"/>
    <property type="nucleotide sequence ID" value="NM_005428.3"/>
</dbReference>
<dbReference type="PDB" id="2CRH">
    <property type="method" value="NMR"/>
    <property type="chains" value="A=629-775"/>
</dbReference>
<dbReference type="PDB" id="2LCT">
    <property type="method" value="NMR"/>
    <property type="chains" value="A=664-767"/>
</dbReference>
<dbReference type="PDB" id="2MC1">
    <property type="method" value="NMR"/>
    <property type="chains" value="A=664-767"/>
</dbReference>
<dbReference type="PDB" id="2ROR">
    <property type="method" value="NMR"/>
    <property type="chains" value="A=629-775"/>
</dbReference>
<dbReference type="PDB" id="3BJI">
    <property type="method" value="X-ray"/>
    <property type="resolution" value="2.60 A"/>
    <property type="chains" value="A/B=189-565"/>
</dbReference>
<dbReference type="PDB" id="3KY9">
    <property type="method" value="X-ray"/>
    <property type="resolution" value="2.73 A"/>
    <property type="chains" value="A/B=2-584"/>
</dbReference>
<dbReference type="PDB" id="6NEW">
    <property type="method" value="X-ray"/>
    <property type="resolution" value="2.50 A"/>
    <property type="chains" value="A=170-575"/>
</dbReference>
<dbReference type="PDB" id="6NF1">
    <property type="method" value="X-ray"/>
    <property type="resolution" value="2.60 A"/>
    <property type="chains" value="A=2-575"/>
</dbReference>
<dbReference type="PDB" id="6NFA">
    <property type="method" value="X-ray"/>
    <property type="resolution" value="2.70 A"/>
    <property type="chains" value="A=170-575"/>
</dbReference>
<dbReference type="PDBsum" id="2CRH"/>
<dbReference type="PDBsum" id="2LCT"/>
<dbReference type="PDBsum" id="2MC1"/>
<dbReference type="PDBsum" id="2ROR"/>
<dbReference type="PDBsum" id="3BJI"/>
<dbReference type="PDBsum" id="3KY9"/>
<dbReference type="PDBsum" id="6NEW"/>
<dbReference type="PDBsum" id="6NF1"/>
<dbReference type="PDBsum" id="6NFA"/>
<dbReference type="BMRB" id="P15498"/>
<dbReference type="SMR" id="P15498"/>
<dbReference type="BioGRID" id="113252">
    <property type="interactions" value="190"/>
</dbReference>
<dbReference type="CORUM" id="P15498"/>
<dbReference type="DIP" id="DIP-1061N"/>
<dbReference type="FunCoup" id="P15498">
    <property type="interactions" value="1926"/>
</dbReference>
<dbReference type="IntAct" id="P15498">
    <property type="interactions" value="142"/>
</dbReference>
<dbReference type="MINT" id="P15498"/>
<dbReference type="STRING" id="9606.ENSP00000472929"/>
<dbReference type="BindingDB" id="P15498"/>
<dbReference type="ChEMBL" id="CHEMBL3259472"/>
<dbReference type="GlyGen" id="P15498">
    <property type="glycosylation" value="1 site, 1 O-linked glycan (1 site)"/>
</dbReference>
<dbReference type="iPTMnet" id="P15498"/>
<dbReference type="PhosphoSitePlus" id="P15498"/>
<dbReference type="BioMuta" id="VAV1"/>
<dbReference type="DMDM" id="13124807"/>
<dbReference type="CPTAC" id="CPTAC-1226"/>
<dbReference type="CPTAC" id="CPTAC-1227"/>
<dbReference type="jPOST" id="P15498"/>
<dbReference type="MassIVE" id="P15498"/>
<dbReference type="PaxDb" id="9606-ENSP00000472929"/>
<dbReference type="PeptideAtlas" id="P15498"/>
<dbReference type="ProteomicsDB" id="53143">
    <molecule id="P15498-1"/>
</dbReference>
<dbReference type="Pumba" id="P15498"/>
<dbReference type="Antibodypedia" id="665">
    <property type="antibodies" value="747 antibodies from 41 providers"/>
</dbReference>
<dbReference type="DNASU" id="7409"/>
<dbReference type="Ensembl" id="ENST00000596764.5">
    <molecule id="P15498-2"/>
    <property type="protein sequence ID" value="ENSP00000469450.1"/>
    <property type="gene ID" value="ENSG00000141968.8"/>
</dbReference>
<dbReference type="Ensembl" id="ENST00000602142.6">
    <molecule id="P15498-1"/>
    <property type="protein sequence ID" value="ENSP00000472929.1"/>
    <property type="gene ID" value="ENSG00000141968.8"/>
</dbReference>
<dbReference type="GeneID" id="7409"/>
<dbReference type="KEGG" id="hsa:7409"/>
<dbReference type="MANE-Select" id="ENST00000602142.6">
    <property type="protein sequence ID" value="ENSP00000472929.1"/>
    <property type="RefSeq nucleotide sequence ID" value="NM_005428.4"/>
    <property type="RefSeq protein sequence ID" value="NP_005419.2"/>
</dbReference>
<dbReference type="UCSC" id="uc002mfu.3">
    <molecule id="P15498-1"/>
    <property type="organism name" value="human"/>
</dbReference>
<dbReference type="AGR" id="HGNC:12657"/>
<dbReference type="CTD" id="7409"/>
<dbReference type="DisGeNET" id="7409"/>
<dbReference type="GeneCards" id="VAV1"/>
<dbReference type="HGNC" id="HGNC:12657">
    <property type="gene designation" value="VAV1"/>
</dbReference>
<dbReference type="HPA" id="ENSG00000141968">
    <property type="expression patterns" value="Tissue enhanced (bone marrow, lymphoid tissue)"/>
</dbReference>
<dbReference type="MalaCards" id="VAV1"/>
<dbReference type="MIM" id="164875">
    <property type="type" value="gene"/>
</dbReference>
<dbReference type="neXtProt" id="NX_P15498"/>
<dbReference type="OpenTargets" id="ENSG00000141968"/>
<dbReference type="PharmGKB" id="PA37280"/>
<dbReference type="VEuPathDB" id="HostDB:ENSG00000141968"/>
<dbReference type="eggNOG" id="KOG2996">
    <property type="taxonomic scope" value="Eukaryota"/>
</dbReference>
<dbReference type="GeneTree" id="ENSGT00940000159125"/>
<dbReference type="InParanoid" id="P15498"/>
<dbReference type="OMA" id="PYISRPT"/>
<dbReference type="OrthoDB" id="5340910at2759"/>
<dbReference type="PAN-GO" id="P15498">
    <property type="GO annotations" value="4 GO annotations based on evolutionary models"/>
</dbReference>
<dbReference type="PhylomeDB" id="P15498"/>
<dbReference type="TreeFam" id="TF316171"/>
<dbReference type="PathwayCommons" id="P15498"/>
<dbReference type="Reactome" id="R-HSA-114604">
    <property type="pathway name" value="GPVI-mediated activation cascade"/>
</dbReference>
<dbReference type="Reactome" id="R-HSA-1257604">
    <property type="pathway name" value="PIP3 activates AKT signaling"/>
</dbReference>
<dbReference type="Reactome" id="R-HSA-1433557">
    <property type="pathway name" value="Signaling by SCF-KIT"/>
</dbReference>
<dbReference type="Reactome" id="R-HSA-193648">
    <property type="pathway name" value="NRAGE signals death through JNK"/>
</dbReference>
<dbReference type="Reactome" id="R-HSA-2029482">
    <property type="pathway name" value="Regulation of actin dynamics for phagocytic cup formation"/>
</dbReference>
<dbReference type="Reactome" id="R-HSA-2219530">
    <property type="pathway name" value="Constitutive Signaling by Aberrant PI3K in Cancer"/>
</dbReference>
<dbReference type="Reactome" id="R-HSA-2871796">
    <property type="pathway name" value="FCERI mediated MAPK activation"/>
</dbReference>
<dbReference type="Reactome" id="R-HSA-2871809">
    <property type="pathway name" value="FCERI mediated Ca+2 mobilization"/>
</dbReference>
<dbReference type="Reactome" id="R-HSA-389359">
    <property type="pathway name" value="CD28 dependent Vav1 pathway"/>
</dbReference>
<dbReference type="Reactome" id="R-HSA-416482">
    <property type="pathway name" value="G alpha (12/13) signalling events"/>
</dbReference>
<dbReference type="Reactome" id="R-HSA-4420097">
    <property type="pathway name" value="VEGFA-VEGFR2 Pathway"/>
</dbReference>
<dbReference type="Reactome" id="R-HSA-512988">
    <property type="pathway name" value="Interleukin-3, Interleukin-5 and GM-CSF signaling"/>
</dbReference>
<dbReference type="Reactome" id="R-HSA-5218920">
    <property type="pathway name" value="VEGFR2 mediated vascular permeability"/>
</dbReference>
<dbReference type="Reactome" id="R-HSA-6811558">
    <property type="pathway name" value="PI5P, PP2A and IER3 Regulate PI3K/AKT Signaling"/>
</dbReference>
<dbReference type="Reactome" id="R-HSA-8980692">
    <property type="pathway name" value="RHOA GTPase cycle"/>
</dbReference>
<dbReference type="Reactome" id="R-HSA-9013149">
    <property type="pathway name" value="RAC1 GTPase cycle"/>
</dbReference>
<dbReference type="Reactome" id="R-HSA-9013404">
    <property type="pathway name" value="RAC2 GTPase cycle"/>
</dbReference>
<dbReference type="Reactome" id="R-HSA-9013408">
    <property type="pathway name" value="RHOG GTPase cycle"/>
</dbReference>
<dbReference type="Reactome" id="R-HSA-9027284">
    <property type="pathway name" value="Erythropoietin activates RAS"/>
</dbReference>
<dbReference type="Reactome" id="R-HSA-912631">
    <property type="pathway name" value="Regulation of signaling by CBL"/>
</dbReference>
<dbReference type="Reactome" id="R-HSA-9664422">
    <property type="pathway name" value="FCGR3A-mediated phagocytosis"/>
</dbReference>
<dbReference type="Reactome" id="R-HSA-9679191">
    <property type="pathway name" value="Potential therapeutics for SARS"/>
</dbReference>
<dbReference type="Reactome" id="R-HSA-9748787">
    <property type="pathway name" value="Azathioprine ADME"/>
</dbReference>
<dbReference type="Reactome" id="R-HSA-983695">
    <property type="pathway name" value="Antigen activates B Cell Receptor (BCR) leading to generation of second messengers"/>
</dbReference>
<dbReference type="SignaLink" id="P15498"/>
<dbReference type="SIGNOR" id="P15498"/>
<dbReference type="BioGRID-ORCS" id="7409">
    <property type="hits" value="21 hits in 1156 CRISPR screens"/>
</dbReference>
<dbReference type="ChiTaRS" id="VAV1">
    <property type="organism name" value="human"/>
</dbReference>
<dbReference type="EvolutionaryTrace" id="P15498"/>
<dbReference type="GenomeRNAi" id="7409"/>
<dbReference type="Pharos" id="P15498">
    <property type="development level" value="Tchem"/>
</dbReference>
<dbReference type="PRO" id="PR:P15498"/>
<dbReference type="Proteomes" id="UP000005640">
    <property type="component" value="Chromosome 19"/>
</dbReference>
<dbReference type="RNAct" id="P15498">
    <property type="molecule type" value="protein"/>
</dbReference>
<dbReference type="Bgee" id="ENSG00000141968">
    <property type="expression patterns" value="Expressed in granulocyte and 127 other cell types or tissues"/>
</dbReference>
<dbReference type="ExpressionAtlas" id="P15498">
    <property type="expression patterns" value="baseline and differential"/>
</dbReference>
<dbReference type="GO" id="GO:0005911">
    <property type="term" value="C:cell-cell junction"/>
    <property type="evidence" value="ECO:0007669"/>
    <property type="project" value="Ensembl"/>
</dbReference>
<dbReference type="GO" id="GO:0005737">
    <property type="term" value="C:cytoplasm"/>
    <property type="evidence" value="ECO:0000314"/>
    <property type="project" value="UniProt"/>
</dbReference>
<dbReference type="GO" id="GO:0005829">
    <property type="term" value="C:cytosol"/>
    <property type="evidence" value="ECO:0000304"/>
    <property type="project" value="Reactome"/>
</dbReference>
<dbReference type="GO" id="GO:0005886">
    <property type="term" value="C:plasma membrane"/>
    <property type="evidence" value="ECO:0000304"/>
    <property type="project" value="Reactome"/>
</dbReference>
<dbReference type="GO" id="GO:0005085">
    <property type="term" value="F:guanyl-nucleotide exchange factor activity"/>
    <property type="evidence" value="ECO:0000314"/>
    <property type="project" value="UniProt"/>
</dbReference>
<dbReference type="GO" id="GO:0140031">
    <property type="term" value="F:phosphorylation-dependent protein binding"/>
    <property type="evidence" value="ECO:0007669"/>
    <property type="project" value="Ensembl"/>
</dbReference>
<dbReference type="GO" id="GO:0001784">
    <property type="term" value="F:phosphotyrosine residue binding"/>
    <property type="evidence" value="ECO:0000353"/>
    <property type="project" value="CAFA"/>
</dbReference>
<dbReference type="GO" id="GO:0008270">
    <property type="term" value="F:zinc ion binding"/>
    <property type="evidence" value="ECO:0007669"/>
    <property type="project" value="UniProtKB-KW"/>
</dbReference>
<dbReference type="GO" id="GO:0016477">
    <property type="term" value="P:cell migration"/>
    <property type="evidence" value="ECO:0000318"/>
    <property type="project" value="GO_Central"/>
</dbReference>
<dbReference type="GO" id="GO:0071466">
    <property type="term" value="P:cellular response to xenobiotic stimulus"/>
    <property type="evidence" value="ECO:0000304"/>
    <property type="project" value="Reactome"/>
</dbReference>
<dbReference type="GO" id="GO:0038095">
    <property type="term" value="P:Fc-epsilon receptor signaling pathway"/>
    <property type="evidence" value="ECO:0000304"/>
    <property type="project" value="Reactome"/>
</dbReference>
<dbReference type="GO" id="GO:0038096">
    <property type="term" value="P:Fc-gamma receptor signaling pathway involved in phagocytosis"/>
    <property type="evidence" value="ECO:0000304"/>
    <property type="project" value="Reactome"/>
</dbReference>
<dbReference type="GO" id="GO:0007186">
    <property type="term" value="P:G protein-coupled receptor signaling pathway"/>
    <property type="evidence" value="ECO:0007669"/>
    <property type="project" value="Ensembl"/>
</dbReference>
<dbReference type="GO" id="GO:0002768">
    <property type="term" value="P:immune response-regulating cell surface receptor signaling pathway"/>
    <property type="evidence" value="ECO:0000318"/>
    <property type="project" value="GO_Central"/>
</dbReference>
<dbReference type="GO" id="GO:0007229">
    <property type="term" value="P:integrin-mediated signaling pathway"/>
    <property type="evidence" value="ECO:0007669"/>
    <property type="project" value="Ensembl"/>
</dbReference>
<dbReference type="GO" id="GO:0030101">
    <property type="term" value="P:natural killer cell activation"/>
    <property type="evidence" value="ECO:0000314"/>
    <property type="project" value="UniProt"/>
</dbReference>
<dbReference type="GO" id="GO:0042267">
    <property type="term" value="P:natural killer cell mediated cytotoxicity"/>
    <property type="evidence" value="ECO:0000314"/>
    <property type="project" value="UniProt"/>
</dbReference>
<dbReference type="GO" id="GO:0030593">
    <property type="term" value="P:neutrophil chemotaxis"/>
    <property type="evidence" value="ECO:0007669"/>
    <property type="project" value="Ensembl"/>
</dbReference>
<dbReference type="GO" id="GO:0030168">
    <property type="term" value="P:platelet activation"/>
    <property type="evidence" value="ECO:0000304"/>
    <property type="project" value="Reactome"/>
</dbReference>
<dbReference type="GO" id="GO:0045954">
    <property type="term" value="P:positive regulation of natural killer cell mediated cytotoxicity"/>
    <property type="evidence" value="ECO:0007669"/>
    <property type="project" value="Ensembl"/>
</dbReference>
<dbReference type="GO" id="GO:0051897">
    <property type="term" value="P:positive regulation of phosphatidylinositol 3-kinase/protein kinase B signal transduction"/>
    <property type="evidence" value="ECO:0000318"/>
    <property type="project" value="GO_Central"/>
</dbReference>
<dbReference type="GO" id="GO:0072593">
    <property type="term" value="P:reactive oxygen species metabolic process"/>
    <property type="evidence" value="ECO:0007669"/>
    <property type="project" value="Ensembl"/>
</dbReference>
<dbReference type="GO" id="GO:0008361">
    <property type="term" value="P:regulation of cell size"/>
    <property type="evidence" value="ECO:0000316"/>
    <property type="project" value="UniProtKB"/>
</dbReference>
<dbReference type="GO" id="GO:0043087">
    <property type="term" value="P:regulation of GTPase activity"/>
    <property type="evidence" value="ECO:0000316"/>
    <property type="project" value="UniProtKB"/>
</dbReference>
<dbReference type="GO" id="GO:0051056">
    <property type="term" value="P:regulation of small GTPase mediated signal transduction"/>
    <property type="evidence" value="ECO:0000304"/>
    <property type="project" value="Reactome"/>
</dbReference>
<dbReference type="GO" id="GO:0007264">
    <property type="term" value="P:small GTPase-mediated signal transduction"/>
    <property type="evidence" value="ECO:0000318"/>
    <property type="project" value="GO_Central"/>
</dbReference>
<dbReference type="GO" id="GO:0031295">
    <property type="term" value="P:T cell costimulation"/>
    <property type="evidence" value="ECO:0000314"/>
    <property type="project" value="UniProt"/>
</dbReference>
<dbReference type="GO" id="GO:0030217">
    <property type="term" value="P:T cell differentiation"/>
    <property type="evidence" value="ECO:0007669"/>
    <property type="project" value="Ensembl"/>
</dbReference>
<dbReference type="GO" id="GO:0048010">
    <property type="term" value="P:vascular endothelial growth factor receptor signaling pathway"/>
    <property type="evidence" value="ECO:0000304"/>
    <property type="project" value="Reactome"/>
</dbReference>
<dbReference type="CDD" id="cd20867">
    <property type="entry name" value="C1_VAV1"/>
    <property type="match status" value="1"/>
</dbReference>
<dbReference type="CDD" id="cd21262">
    <property type="entry name" value="CH_VAV1"/>
    <property type="match status" value="1"/>
</dbReference>
<dbReference type="CDD" id="cd01223">
    <property type="entry name" value="PH_Vav"/>
    <property type="match status" value="1"/>
</dbReference>
<dbReference type="CDD" id="cd00160">
    <property type="entry name" value="RhoGEF"/>
    <property type="match status" value="1"/>
</dbReference>
<dbReference type="CDD" id="cd10405">
    <property type="entry name" value="SH2_Vav1"/>
    <property type="match status" value="1"/>
</dbReference>
<dbReference type="CDD" id="cd11979">
    <property type="entry name" value="SH3_VAV1_1"/>
    <property type="match status" value="1"/>
</dbReference>
<dbReference type="CDD" id="cd11976">
    <property type="entry name" value="SH3_VAV1_2"/>
    <property type="match status" value="1"/>
</dbReference>
<dbReference type="FunFam" id="1.20.900.10:FF:000009">
    <property type="entry name" value="Vav guanine nucleotide exchange factor 1"/>
    <property type="match status" value="1"/>
</dbReference>
<dbReference type="FunFam" id="3.30.60.20:FF:000015">
    <property type="entry name" value="Vav guanine nucleotide exchange factor 1"/>
    <property type="match status" value="1"/>
</dbReference>
<dbReference type="FunFam" id="1.10.418.10:FF:000019">
    <property type="entry name" value="Vav guanine nucleotide exchange factor 2"/>
    <property type="match status" value="1"/>
</dbReference>
<dbReference type="FunFam" id="2.30.29.30:FF:000050">
    <property type="entry name" value="Vav guanine nucleotide exchange factor 2"/>
    <property type="match status" value="1"/>
</dbReference>
<dbReference type="FunFam" id="3.30.505.10:FF:000024">
    <property type="entry name" value="Vav guanine nucleotide exchange factor 2"/>
    <property type="match status" value="1"/>
</dbReference>
<dbReference type="FunFam" id="2.30.30.40:FF:000039">
    <property type="entry name" value="Vav guanine nucleotide exchange factor 3"/>
    <property type="match status" value="1"/>
</dbReference>
<dbReference type="FunFam" id="2.30.30.40:FF:000108">
    <property type="entry name" value="Vav guanine nucleotide exchange factor 3"/>
    <property type="match status" value="1"/>
</dbReference>
<dbReference type="Gene3D" id="3.30.60.20">
    <property type="match status" value="1"/>
</dbReference>
<dbReference type="Gene3D" id="1.10.418.10">
    <property type="entry name" value="Calponin-like domain"/>
    <property type="match status" value="1"/>
</dbReference>
<dbReference type="Gene3D" id="1.20.900.10">
    <property type="entry name" value="Dbl homology (DH) domain"/>
    <property type="match status" value="1"/>
</dbReference>
<dbReference type="Gene3D" id="2.30.29.30">
    <property type="entry name" value="Pleckstrin-homology domain (PH domain)/Phosphotyrosine-binding domain (PTB)"/>
    <property type="match status" value="1"/>
</dbReference>
<dbReference type="Gene3D" id="3.30.505.10">
    <property type="entry name" value="SH2 domain"/>
    <property type="match status" value="1"/>
</dbReference>
<dbReference type="Gene3D" id="2.30.30.40">
    <property type="entry name" value="SH3 Domains"/>
    <property type="match status" value="2"/>
</dbReference>
<dbReference type="IDEAL" id="IID00652"/>
<dbReference type="InterPro" id="IPR022613">
    <property type="entry name" value="CAMSAP-like_CH_dom"/>
</dbReference>
<dbReference type="InterPro" id="IPR001715">
    <property type="entry name" value="CH_dom"/>
</dbReference>
<dbReference type="InterPro" id="IPR036872">
    <property type="entry name" value="CH_dom_sf"/>
</dbReference>
<dbReference type="InterPro" id="IPR035899">
    <property type="entry name" value="DBL_dom_sf"/>
</dbReference>
<dbReference type="InterPro" id="IPR000219">
    <property type="entry name" value="DH_dom"/>
</dbReference>
<dbReference type="InterPro" id="IPR001331">
    <property type="entry name" value="GDS_CDC24_CS"/>
</dbReference>
<dbReference type="InterPro" id="IPR002219">
    <property type="entry name" value="PE/DAG-bd"/>
</dbReference>
<dbReference type="InterPro" id="IPR011993">
    <property type="entry name" value="PH-like_dom_sf"/>
</dbReference>
<dbReference type="InterPro" id="IPR001849">
    <property type="entry name" value="PH_domain"/>
</dbReference>
<dbReference type="InterPro" id="IPR037832">
    <property type="entry name" value="PH_Vav"/>
</dbReference>
<dbReference type="InterPro" id="IPR000980">
    <property type="entry name" value="SH2"/>
</dbReference>
<dbReference type="InterPro" id="IPR036860">
    <property type="entry name" value="SH2_dom_sf"/>
</dbReference>
<dbReference type="InterPro" id="IPR036028">
    <property type="entry name" value="SH3-like_dom_sf"/>
</dbReference>
<dbReference type="InterPro" id="IPR001452">
    <property type="entry name" value="SH3_domain"/>
</dbReference>
<dbReference type="InterPro" id="IPR003096">
    <property type="entry name" value="SM22_calponin"/>
</dbReference>
<dbReference type="InterPro" id="IPR035879">
    <property type="entry name" value="VAV1_SH2"/>
</dbReference>
<dbReference type="InterPro" id="IPR035730">
    <property type="entry name" value="VAV1_SH3_1"/>
</dbReference>
<dbReference type="InterPro" id="IPR035729">
    <property type="entry name" value="VAV1_SH3_2"/>
</dbReference>
<dbReference type="PANTHER" id="PTHR45818">
    <property type="entry name" value="PROTEIN VAV"/>
    <property type="match status" value="1"/>
</dbReference>
<dbReference type="PANTHER" id="PTHR45818:SF2">
    <property type="entry name" value="PROTO-ONCOGENE VAV"/>
    <property type="match status" value="1"/>
</dbReference>
<dbReference type="Pfam" id="PF00130">
    <property type="entry name" value="C1_1"/>
    <property type="match status" value="1"/>
</dbReference>
<dbReference type="Pfam" id="PF11971">
    <property type="entry name" value="CAMSAP_CH"/>
    <property type="match status" value="1"/>
</dbReference>
<dbReference type="Pfam" id="PF00169">
    <property type="entry name" value="PH"/>
    <property type="match status" value="1"/>
</dbReference>
<dbReference type="Pfam" id="PF00621">
    <property type="entry name" value="RhoGEF"/>
    <property type="match status" value="1"/>
</dbReference>
<dbReference type="Pfam" id="PF00017">
    <property type="entry name" value="SH2"/>
    <property type="match status" value="1"/>
</dbReference>
<dbReference type="Pfam" id="PF00018">
    <property type="entry name" value="SH3_1"/>
    <property type="match status" value="2"/>
</dbReference>
<dbReference type="PRINTS" id="PR00401">
    <property type="entry name" value="SH2DOMAIN"/>
</dbReference>
<dbReference type="PRINTS" id="PR00452">
    <property type="entry name" value="SH3DOMAIN"/>
</dbReference>
<dbReference type="PRINTS" id="PR00888">
    <property type="entry name" value="SM22CALPONIN"/>
</dbReference>
<dbReference type="SMART" id="SM00109">
    <property type="entry name" value="C1"/>
    <property type="match status" value="1"/>
</dbReference>
<dbReference type="SMART" id="SM00033">
    <property type="entry name" value="CH"/>
    <property type="match status" value="1"/>
</dbReference>
<dbReference type="SMART" id="SM00233">
    <property type="entry name" value="PH"/>
    <property type="match status" value="1"/>
</dbReference>
<dbReference type="SMART" id="SM00325">
    <property type="entry name" value="RhoGEF"/>
    <property type="match status" value="1"/>
</dbReference>
<dbReference type="SMART" id="SM00252">
    <property type="entry name" value="SH2"/>
    <property type="match status" value="1"/>
</dbReference>
<dbReference type="SMART" id="SM00326">
    <property type="entry name" value="SH3"/>
    <property type="match status" value="2"/>
</dbReference>
<dbReference type="SUPFAM" id="SSF47576">
    <property type="entry name" value="Calponin-homology domain, CH-domain"/>
    <property type="match status" value="1"/>
</dbReference>
<dbReference type="SUPFAM" id="SSF48065">
    <property type="entry name" value="DBL homology domain (DH-domain)"/>
    <property type="match status" value="1"/>
</dbReference>
<dbReference type="SUPFAM" id="SSF50729">
    <property type="entry name" value="PH domain-like"/>
    <property type="match status" value="1"/>
</dbReference>
<dbReference type="SUPFAM" id="SSF55550">
    <property type="entry name" value="SH2 domain"/>
    <property type="match status" value="1"/>
</dbReference>
<dbReference type="SUPFAM" id="SSF50044">
    <property type="entry name" value="SH3-domain"/>
    <property type="match status" value="1"/>
</dbReference>
<dbReference type="PROSITE" id="PS50021">
    <property type="entry name" value="CH"/>
    <property type="match status" value="1"/>
</dbReference>
<dbReference type="PROSITE" id="PS00741">
    <property type="entry name" value="DH_1"/>
    <property type="match status" value="1"/>
</dbReference>
<dbReference type="PROSITE" id="PS50010">
    <property type="entry name" value="DH_2"/>
    <property type="match status" value="1"/>
</dbReference>
<dbReference type="PROSITE" id="PS50003">
    <property type="entry name" value="PH_DOMAIN"/>
    <property type="match status" value="1"/>
</dbReference>
<dbReference type="PROSITE" id="PS50001">
    <property type="entry name" value="SH2"/>
    <property type="match status" value="1"/>
</dbReference>
<dbReference type="PROSITE" id="PS50002">
    <property type="entry name" value="SH3"/>
    <property type="match status" value="2"/>
</dbReference>
<dbReference type="PROSITE" id="PS00479">
    <property type="entry name" value="ZF_DAG_PE_1"/>
    <property type="match status" value="1"/>
</dbReference>
<dbReference type="PROSITE" id="PS50081">
    <property type="entry name" value="ZF_DAG_PE_2"/>
    <property type="match status" value="1"/>
</dbReference>